<gene>
    <name evidence="1" type="primary">rpsE</name>
    <name type="ordered locus">Mfl140</name>
</gene>
<reference key="1">
    <citation type="submission" date="2004-06" db="EMBL/GenBank/DDBJ databases">
        <authorList>
            <person name="Birren B.W."/>
            <person name="Stange-Thomann N."/>
            <person name="Hafez N."/>
            <person name="DeCaprio D."/>
            <person name="Fisher S."/>
            <person name="Butler J."/>
            <person name="Elkins T."/>
            <person name="Kodira C.D."/>
            <person name="Major J."/>
            <person name="Wang S."/>
            <person name="Nicol R."/>
            <person name="Nusbaum C."/>
        </authorList>
    </citation>
    <scope>NUCLEOTIDE SEQUENCE [LARGE SCALE GENOMIC DNA]</scope>
    <source>
        <strain>ATCC 33453 / NBRC 100688 / NCTC 11704 / L1</strain>
    </source>
</reference>
<feature type="chain" id="PRO_0000131542" description="Small ribosomal subunit protein uS5">
    <location>
        <begin position="1"/>
        <end position="206"/>
    </location>
</feature>
<feature type="domain" description="S5 DRBM" evidence="1">
    <location>
        <begin position="43"/>
        <end position="106"/>
    </location>
</feature>
<feature type="region of interest" description="Disordered" evidence="2">
    <location>
        <begin position="1"/>
        <end position="42"/>
    </location>
</feature>
<accession>Q6F1X7</accession>
<evidence type="ECO:0000255" key="1">
    <source>
        <dbReference type="HAMAP-Rule" id="MF_01307"/>
    </source>
</evidence>
<evidence type="ECO:0000256" key="2">
    <source>
        <dbReference type="SAM" id="MobiDB-lite"/>
    </source>
</evidence>
<evidence type="ECO:0000305" key="3"/>
<organism>
    <name type="scientific">Mesoplasma florum (strain ATCC 33453 / NBRC 100688 / NCTC 11704 / L1)</name>
    <name type="common">Acholeplasma florum</name>
    <dbReference type="NCBI Taxonomy" id="265311"/>
    <lineage>
        <taxon>Bacteria</taxon>
        <taxon>Bacillati</taxon>
        <taxon>Mycoplasmatota</taxon>
        <taxon>Mollicutes</taxon>
        <taxon>Entomoplasmatales</taxon>
        <taxon>Entomoplasmataceae</taxon>
        <taxon>Mesoplasma</taxon>
    </lineage>
</organism>
<dbReference type="EMBL" id="AE017263">
    <property type="protein sequence ID" value="AAT75496.1"/>
    <property type="molecule type" value="Genomic_DNA"/>
</dbReference>
<dbReference type="RefSeq" id="WP_011183037.1">
    <property type="nucleotide sequence ID" value="NC_006055.1"/>
</dbReference>
<dbReference type="RefSeq" id="YP_053380.1">
    <property type="nucleotide sequence ID" value="NC_006055.1"/>
</dbReference>
<dbReference type="SMR" id="Q6F1X7"/>
<dbReference type="STRING" id="265311.Mfl140"/>
<dbReference type="PaxDb" id="265311-Mfl140"/>
<dbReference type="EnsemblBacteria" id="AAT75496">
    <property type="protein sequence ID" value="AAT75496"/>
    <property type="gene ID" value="Mfl140"/>
</dbReference>
<dbReference type="GeneID" id="2897955"/>
<dbReference type="KEGG" id="mfl:Mfl140"/>
<dbReference type="PATRIC" id="fig|265311.5.peg.141"/>
<dbReference type="eggNOG" id="COG0098">
    <property type="taxonomic scope" value="Bacteria"/>
</dbReference>
<dbReference type="HOGENOM" id="CLU_065898_2_1_14"/>
<dbReference type="OrthoDB" id="9809045at2"/>
<dbReference type="Proteomes" id="UP000006647">
    <property type="component" value="Chromosome"/>
</dbReference>
<dbReference type="GO" id="GO:0015935">
    <property type="term" value="C:small ribosomal subunit"/>
    <property type="evidence" value="ECO:0007669"/>
    <property type="project" value="InterPro"/>
</dbReference>
<dbReference type="GO" id="GO:0019843">
    <property type="term" value="F:rRNA binding"/>
    <property type="evidence" value="ECO:0007669"/>
    <property type="project" value="UniProtKB-UniRule"/>
</dbReference>
<dbReference type="GO" id="GO:0003735">
    <property type="term" value="F:structural constituent of ribosome"/>
    <property type="evidence" value="ECO:0007669"/>
    <property type="project" value="InterPro"/>
</dbReference>
<dbReference type="GO" id="GO:0006412">
    <property type="term" value="P:translation"/>
    <property type="evidence" value="ECO:0007669"/>
    <property type="project" value="UniProtKB-UniRule"/>
</dbReference>
<dbReference type="FunFam" id="3.30.160.20:FF:000001">
    <property type="entry name" value="30S ribosomal protein S5"/>
    <property type="match status" value="1"/>
</dbReference>
<dbReference type="FunFam" id="3.30.230.10:FF:000002">
    <property type="entry name" value="30S ribosomal protein S5"/>
    <property type="match status" value="1"/>
</dbReference>
<dbReference type="Gene3D" id="3.30.160.20">
    <property type="match status" value="1"/>
</dbReference>
<dbReference type="Gene3D" id="3.30.230.10">
    <property type="match status" value="1"/>
</dbReference>
<dbReference type="HAMAP" id="MF_01307_B">
    <property type="entry name" value="Ribosomal_uS5_B"/>
    <property type="match status" value="1"/>
</dbReference>
<dbReference type="InterPro" id="IPR020568">
    <property type="entry name" value="Ribosomal_Su5_D2-typ_SF"/>
</dbReference>
<dbReference type="InterPro" id="IPR000851">
    <property type="entry name" value="Ribosomal_uS5"/>
</dbReference>
<dbReference type="InterPro" id="IPR005712">
    <property type="entry name" value="Ribosomal_uS5_bac-type"/>
</dbReference>
<dbReference type="InterPro" id="IPR005324">
    <property type="entry name" value="Ribosomal_uS5_C"/>
</dbReference>
<dbReference type="InterPro" id="IPR013810">
    <property type="entry name" value="Ribosomal_uS5_N"/>
</dbReference>
<dbReference type="InterPro" id="IPR018192">
    <property type="entry name" value="Ribosomal_uS5_N_CS"/>
</dbReference>
<dbReference type="InterPro" id="IPR014721">
    <property type="entry name" value="Ribsml_uS5_D2-typ_fold_subgr"/>
</dbReference>
<dbReference type="NCBIfam" id="TIGR01021">
    <property type="entry name" value="rpsE_bact"/>
    <property type="match status" value="1"/>
</dbReference>
<dbReference type="PANTHER" id="PTHR48277">
    <property type="entry name" value="MITOCHONDRIAL RIBOSOMAL PROTEIN S5"/>
    <property type="match status" value="1"/>
</dbReference>
<dbReference type="PANTHER" id="PTHR48277:SF1">
    <property type="entry name" value="MITOCHONDRIAL RIBOSOMAL PROTEIN S5"/>
    <property type="match status" value="1"/>
</dbReference>
<dbReference type="Pfam" id="PF00333">
    <property type="entry name" value="Ribosomal_S5"/>
    <property type="match status" value="1"/>
</dbReference>
<dbReference type="Pfam" id="PF03719">
    <property type="entry name" value="Ribosomal_S5_C"/>
    <property type="match status" value="1"/>
</dbReference>
<dbReference type="SUPFAM" id="SSF54768">
    <property type="entry name" value="dsRNA-binding domain-like"/>
    <property type="match status" value="1"/>
</dbReference>
<dbReference type="SUPFAM" id="SSF54211">
    <property type="entry name" value="Ribosomal protein S5 domain 2-like"/>
    <property type="match status" value="1"/>
</dbReference>
<dbReference type="PROSITE" id="PS00585">
    <property type="entry name" value="RIBOSOMAL_S5"/>
    <property type="match status" value="1"/>
</dbReference>
<dbReference type="PROSITE" id="PS50881">
    <property type="entry name" value="S5_DSRBD"/>
    <property type="match status" value="1"/>
</dbReference>
<protein>
    <recommendedName>
        <fullName evidence="1">Small ribosomal subunit protein uS5</fullName>
    </recommendedName>
    <alternativeName>
        <fullName evidence="3">30S ribosomal protein S5</fullName>
    </alternativeName>
</protein>
<sequence>MENKTEVVVAENANNQTQPERKKFDRKPNRRPQGPKQFQKDDFEEKVVTIRRVTKVTKGGRHFRFAAVVVVGDKKGQVGLGTGKANEVPEAIKKAVKEAKKNLIRVPLRGTTVPHEVIGHFGAGQVLIKPAKPGTGVIAGGPARAVIELAGIADVYAKSLGRNNPINMIRATIDGLSSMHTAKKVNDLRFGKPVIKTEKPKVEETK</sequence>
<comment type="function">
    <text evidence="1">With S4 and S12 plays an important role in translational accuracy.</text>
</comment>
<comment type="function">
    <text evidence="1">Located at the back of the 30S subunit body where it stabilizes the conformation of the head with respect to the body.</text>
</comment>
<comment type="subunit">
    <text evidence="1">Part of the 30S ribosomal subunit. Contacts proteins S4 and S8.</text>
</comment>
<comment type="domain">
    <text>The N-terminal domain interacts with the head of the 30S subunit; the C-terminal domain interacts with the body and contacts protein S4. The interaction surface between S4 and S5 is involved in control of translational fidelity.</text>
</comment>
<comment type="similarity">
    <text evidence="1">Belongs to the universal ribosomal protein uS5 family.</text>
</comment>
<keyword id="KW-1185">Reference proteome</keyword>
<keyword id="KW-0687">Ribonucleoprotein</keyword>
<keyword id="KW-0689">Ribosomal protein</keyword>
<keyword id="KW-0694">RNA-binding</keyword>
<keyword id="KW-0699">rRNA-binding</keyword>
<name>RS5_MESFL</name>
<proteinExistence type="inferred from homology"/>